<proteinExistence type="inferred from homology"/>
<keyword id="KW-0143">Chaperone</keyword>
<gene>
    <name evidence="1" type="primary">hscB</name>
    <name type="ordered locus">STY2786</name>
    <name type="ordered locus">t0316</name>
</gene>
<evidence type="ECO:0000255" key="1">
    <source>
        <dbReference type="HAMAP-Rule" id="MF_00682"/>
    </source>
</evidence>
<name>HSCB_SALTI</name>
<protein>
    <recommendedName>
        <fullName evidence="1">Co-chaperone protein HscB</fullName>
    </recommendedName>
    <alternativeName>
        <fullName evidence="1">Hsc20</fullName>
    </alternativeName>
</protein>
<feature type="chain" id="PRO_0000070988" description="Co-chaperone protein HscB">
    <location>
        <begin position="1"/>
        <end position="171"/>
    </location>
</feature>
<feature type="domain" description="J" evidence="1">
    <location>
        <begin position="2"/>
        <end position="74"/>
    </location>
</feature>
<reference key="1">
    <citation type="journal article" date="2001" name="Nature">
        <title>Complete genome sequence of a multiple drug resistant Salmonella enterica serovar Typhi CT18.</title>
        <authorList>
            <person name="Parkhill J."/>
            <person name="Dougan G."/>
            <person name="James K.D."/>
            <person name="Thomson N.R."/>
            <person name="Pickard D."/>
            <person name="Wain J."/>
            <person name="Churcher C.M."/>
            <person name="Mungall K.L."/>
            <person name="Bentley S.D."/>
            <person name="Holden M.T.G."/>
            <person name="Sebaihia M."/>
            <person name="Baker S."/>
            <person name="Basham D."/>
            <person name="Brooks K."/>
            <person name="Chillingworth T."/>
            <person name="Connerton P."/>
            <person name="Cronin A."/>
            <person name="Davis P."/>
            <person name="Davies R.M."/>
            <person name="Dowd L."/>
            <person name="White N."/>
            <person name="Farrar J."/>
            <person name="Feltwell T."/>
            <person name="Hamlin N."/>
            <person name="Haque A."/>
            <person name="Hien T.T."/>
            <person name="Holroyd S."/>
            <person name="Jagels K."/>
            <person name="Krogh A."/>
            <person name="Larsen T.S."/>
            <person name="Leather S."/>
            <person name="Moule S."/>
            <person name="O'Gaora P."/>
            <person name="Parry C."/>
            <person name="Quail M.A."/>
            <person name="Rutherford K.M."/>
            <person name="Simmonds M."/>
            <person name="Skelton J."/>
            <person name="Stevens K."/>
            <person name="Whitehead S."/>
            <person name="Barrell B.G."/>
        </authorList>
    </citation>
    <scope>NUCLEOTIDE SEQUENCE [LARGE SCALE GENOMIC DNA]</scope>
    <source>
        <strain>CT18</strain>
    </source>
</reference>
<reference key="2">
    <citation type="journal article" date="2003" name="J. Bacteriol.">
        <title>Comparative genomics of Salmonella enterica serovar Typhi strains Ty2 and CT18.</title>
        <authorList>
            <person name="Deng W."/>
            <person name="Liou S.-R."/>
            <person name="Plunkett G. III"/>
            <person name="Mayhew G.F."/>
            <person name="Rose D.J."/>
            <person name="Burland V."/>
            <person name="Kodoyianni V."/>
            <person name="Schwartz D.C."/>
            <person name="Blattner F.R."/>
        </authorList>
    </citation>
    <scope>NUCLEOTIDE SEQUENCE [LARGE SCALE GENOMIC DNA]</scope>
    <source>
        <strain>ATCC 700931 / Ty2</strain>
    </source>
</reference>
<dbReference type="EMBL" id="AL513382">
    <property type="protein sequence ID" value="CAD02743.1"/>
    <property type="molecule type" value="Genomic_DNA"/>
</dbReference>
<dbReference type="EMBL" id="AE014613">
    <property type="protein sequence ID" value="AAO68040.1"/>
    <property type="molecule type" value="Genomic_DNA"/>
</dbReference>
<dbReference type="RefSeq" id="NP_457071.1">
    <property type="nucleotide sequence ID" value="NC_003198.1"/>
</dbReference>
<dbReference type="RefSeq" id="WP_000384391.1">
    <property type="nucleotide sequence ID" value="NZ_WSUR01000007.1"/>
</dbReference>
<dbReference type="SMR" id="Q8Z4N1"/>
<dbReference type="STRING" id="220341.gene:17586677"/>
<dbReference type="KEGG" id="stt:t0316"/>
<dbReference type="KEGG" id="sty:STY2786"/>
<dbReference type="PATRIC" id="fig|220341.7.peg.2831"/>
<dbReference type="eggNOG" id="COG1076">
    <property type="taxonomic scope" value="Bacteria"/>
</dbReference>
<dbReference type="HOGENOM" id="CLU_068529_2_0_6"/>
<dbReference type="OMA" id="LMFIERF"/>
<dbReference type="OrthoDB" id="287587at2"/>
<dbReference type="Proteomes" id="UP000000541">
    <property type="component" value="Chromosome"/>
</dbReference>
<dbReference type="Proteomes" id="UP000002670">
    <property type="component" value="Chromosome"/>
</dbReference>
<dbReference type="GO" id="GO:1990230">
    <property type="term" value="C:iron-sulfur cluster transfer complex"/>
    <property type="evidence" value="ECO:0007669"/>
    <property type="project" value="TreeGrafter"/>
</dbReference>
<dbReference type="GO" id="GO:0001671">
    <property type="term" value="F:ATPase activator activity"/>
    <property type="evidence" value="ECO:0007669"/>
    <property type="project" value="InterPro"/>
</dbReference>
<dbReference type="GO" id="GO:0051087">
    <property type="term" value="F:protein-folding chaperone binding"/>
    <property type="evidence" value="ECO:0007669"/>
    <property type="project" value="InterPro"/>
</dbReference>
<dbReference type="GO" id="GO:0044571">
    <property type="term" value="P:[2Fe-2S] cluster assembly"/>
    <property type="evidence" value="ECO:0007669"/>
    <property type="project" value="InterPro"/>
</dbReference>
<dbReference type="GO" id="GO:0051259">
    <property type="term" value="P:protein complex oligomerization"/>
    <property type="evidence" value="ECO:0007669"/>
    <property type="project" value="InterPro"/>
</dbReference>
<dbReference type="GO" id="GO:0006457">
    <property type="term" value="P:protein folding"/>
    <property type="evidence" value="ECO:0007669"/>
    <property type="project" value="UniProtKB-UniRule"/>
</dbReference>
<dbReference type="CDD" id="cd06257">
    <property type="entry name" value="DnaJ"/>
    <property type="match status" value="1"/>
</dbReference>
<dbReference type="FunFam" id="1.10.287.110:FF:000008">
    <property type="entry name" value="Co-chaperone protein HscB"/>
    <property type="match status" value="1"/>
</dbReference>
<dbReference type="FunFam" id="1.20.1280.20:FF:000001">
    <property type="entry name" value="Co-chaperone protein HscB"/>
    <property type="match status" value="1"/>
</dbReference>
<dbReference type="Gene3D" id="1.10.287.110">
    <property type="entry name" value="DnaJ domain"/>
    <property type="match status" value="1"/>
</dbReference>
<dbReference type="Gene3D" id="1.20.1280.20">
    <property type="entry name" value="HscB, C-terminal domain"/>
    <property type="match status" value="1"/>
</dbReference>
<dbReference type="HAMAP" id="MF_00682">
    <property type="entry name" value="HscB"/>
    <property type="match status" value="1"/>
</dbReference>
<dbReference type="InterPro" id="IPR001623">
    <property type="entry name" value="DnaJ_domain"/>
</dbReference>
<dbReference type="InterPro" id="IPR004640">
    <property type="entry name" value="HscB"/>
</dbReference>
<dbReference type="InterPro" id="IPR036386">
    <property type="entry name" value="HscB_C_sf"/>
</dbReference>
<dbReference type="InterPro" id="IPR009073">
    <property type="entry name" value="HscB_oligo_C"/>
</dbReference>
<dbReference type="InterPro" id="IPR036869">
    <property type="entry name" value="J_dom_sf"/>
</dbReference>
<dbReference type="NCBIfam" id="TIGR00714">
    <property type="entry name" value="hscB"/>
    <property type="match status" value="1"/>
</dbReference>
<dbReference type="NCBIfam" id="NF003449">
    <property type="entry name" value="PRK05014.1"/>
    <property type="match status" value="1"/>
</dbReference>
<dbReference type="PANTHER" id="PTHR14021">
    <property type="entry name" value="IRON-SULFUR CLUSTER CO-CHAPERONE PROTEIN HSCB"/>
    <property type="match status" value="1"/>
</dbReference>
<dbReference type="PANTHER" id="PTHR14021:SF15">
    <property type="entry name" value="IRON-SULFUR CLUSTER CO-CHAPERONE PROTEIN HSCB"/>
    <property type="match status" value="1"/>
</dbReference>
<dbReference type="Pfam" id="PF07743">
    <property type="entry name" value="HSCB_C"/>
    <property type="match status" value="1"/>
</dbReference>
<dbReference type="SMART" id="SM00271">
    <property type="entry name" value="DnaJ"/>
    <property type="match status" value="1"/>
</dbReference>
<dbReference type="SUPFAM" id="SSF46565">
    <property type="entry name" value="Chaperone J-domain"/>
    <property type="match status" value="1"/>
</dbReference>
<dbReference type="SUPFAM" id="SSF47144">
    <property type="entry name" value="HSC20 (HSCB), C-terminal oligomerisation domain"/>
    <property type="match status" value="1"/>
</dbReference>
<dbReference type="PROSITE" id="PS50076">
    <property type="entry name" value="DNAJ_2"/>
    <property type="match status" value="1"/>
</dbReference>
<comment type="function">
    <text evidence="1">Co-chaperone involved in the maturation of iron-sulfur cluster-containing proteins. Seems to help targeting proteins to be folded toward HscA.</text>
</comment>
<comment type="subunit">
    <text evidence="1">Interacts with HscA and stimulates its ATPase activity. Interacts with IscU.</text>
</comment>
<comment type="similarity">
    <text evidence="1">Belongs to the HscB family.</text>
</comment>
<sequence length="171" mass="20014">MDYFTLFGLPARYQIDTQALSFRFQDLQRQYHPDKFANGTQAQQLAAVQQSATINQAWQTLRHPLTRAEYLLSLHGFDLASEQHTVRDTAFLMEQLTLREELDDIEQSKDDARLESFIKRVQKMFDARLQQMVEQLDNAAWDAAADTVRKLRFLDKLRSSAEQLEEKLLDF</sequence>
<organism>
    <name type="scientific">Salmonella typhi</name>
    <dbReference type="NCBI Taxonomy" id="90370"/>
    <lineage>
        <taxon>Bacteria</taxon>
        <taxon>Pseudomonadati</taxon>
        <taxon>Pseudomonadota</taxon>
        <taxon>Gammaproteobacteria</taxon>
        <taxon>Enterobacterales</taxon>
        <taxon>Enterobacteriaceae</taxon>
        <taxon>Salmonella</taxon>
    </lineage>
</organism>
<accession>Q8Z4N1</accession>